<dbReference type="EMBL" id="AK076006">
    <property type="protein sequence ID" value="BAC36114.1"/>
    <property type="molecule type" value="mRNA"/>
</dbReference>
<dbReference type="EMBL" id="AL731780">
    <property type="status" value="NOT_ANNOTATED_CDS"/>
    <property type="molecule type" value="Genomic_DNA"/>
</dbReference>
<dbReference type="EMBL" id="CH466552">
    <property type="protein sequence ID" value="EDL30305.1"/>
    <property type="molecule type" value="Genomic_DNA"/>
</dbReference>
<dbReference type="EMBL" id="CH466552">
    <property type="protein sequence ID" value="EDL30306.1"/>
    <property type="molecule type" value="Genomic_DNA"/>
</dbReference>
<dbReference type="EMBL" id="CH466552">
    <property type="protein sequence ID" value="EDL30307.1"/>
    <property type="molecule type" value="Genomic_DNA"/>
</dbReference>
<dbReference type="EMBL" id="BC029204">
    <property type="protein sequence ID" value="AAH29204.1"/>
    <property type="molecule type" value="mRNA"/>
</dbReference>
<dbReference type="CCDS" id="CCDS18643.1"/>
<dbReference type="RefSeq" id="NP_742157.1">
    <property type="nucleotide sequence ID" value="NM_172145.3"/>
</dbReference>
<dbReference type="RefSeq" id="XP_006503101.1">
    <property type="nucleotide sequence ID" value="XM_006503038.5"/>
</dbReference>
<dbReference type="RefSeq" id="XP_006503103.1">
    <property type="nucleotide sequence ID" value="XM_006503040.5"/>
</dbReference>
<dbReference type="RefSeq" id="XP_036019939.1">
    <property type="nucleotide sequence ID" value="XM_036164046.1"/>
</dbReference>
<dbReference type="SMR" id="Q8K2Y3"/>
<dbReference type="FunCoup" id="Q8K2Y3">
    <property type="interactions" value="16"/>
</dbReference>
<dbReference type="STRING" id="10090.ENSMUSP00000054141"/>
<dbReference type="iPTMnet" id="Q8K2Y3"/>
<dbReference type="PhosphoSitePlus" id="Q8K2Y3"/>
<dbReference type="SwissPalm" id="Q8K2Y3"/>
<dbReference type="jPOST" id="Q8K2Y3"/>
<dbReference type="PaxDb" id="10090-ENSMUSP00000101758"/>
<dbReference type="PeptideAtlas" id="Q8K2Y3"/>
<dbReference type="ProteomicsDB" id="267666"/>
<dbReference type="Pumba" id="Q8K2Y3"/>
<dbReference type="Antibodypedia" id="60829">
    <property type="antibodies" value="19 antibodies from 9 providers"/>
</dbReference>
<dbReference type="Ensembl" id="ENSMUST00000052876.3">
    <property type="protein sequence ID" value="ENSMUSP00000054141.3"/>
    <property type="gene ID" value="ENSMUSG00000050212.5"/>
</dbReference>
<dbReference type="Ensembl" id="ENSMUST00000106150.3">
    <property type="protein sequence ID" value="ENSMUSP00000101756.3"/>
    <property type="gene ID" value="ENSMUSG00000050212.5"/>
</dbReference>
<dbReference type="Ensembl" id="ENSMUST00000106152.3">
    <property type="protein sequence ID" value="ENSMUSP00000101758.3"/>
    <property type="gene ID" value="ENSMUSG00000050212.5"/>
</dbReference>
<dbReference type="GeneID" id="230752"/>
<dbReference type="KEGG" id="mmu:230752"/>
<dbReference type="UCSC" id="uc008usn.1">
    <property type="organism name" value="mouse"/>
</dbReference>
<dbReference type="AGR" id="MGI:1922063"/>
<dbReference type="CTD" id="55194"/>
<dbReference type="MGI" id="MGI:1922063">
    <property type="gene designation" value="Eva1b"/>
</dbReference>
<dbReference type="VEuPathDB" id="HostDB:ENSMUSG00000050212"/>
<dbReference type="eggNOG" id="ENOG502RYRK">
    <property type="taxonomic scope" value="Eukaryota"/>
</dbReference>
<dbReference type="GeneTree" id="ENSGT00940000154096"/>
<dbReference type="HOGENOM" id="CLU_104871_0_0_1"/>
<dbReference type="InParanoid" id="Q8K2Y3"/>
<dbReference type="OMA" id="ISCAPHP"/>
<dbReference type="OrthoDB" id="8956386at2759"/>
<dbReference type="PhylomeDB" id="Q8K2Y3"/>
<dbReference type="TreeFam" id="TF352986"/>
<dbReference type="BioGRID-ORCS" id="230752">
    <property type="hits" value="2 hits in 79 CRISPR screens"/>
</dbReference>
<dbReference type="PRO" id="PR:Q8K2Y3"/>
<dbReference type="Proteomes" id="UP000000589">
    <property type="component" value="Chromosome 4"/>
</dbReference>
<dbReference type="RNAct" id="Q8K2Y3">
    <property type="molecule type" value="protein"/>
</dbReference>
<dbReference type="Bgee" id="ENSMUSG00000050212">
    <property type="expression patterns" value="Expressed in external carotid artery and 198 other cell types or tissues"/>
</dbReference>
<dbReference type="GO" id="GO:0016020">
    <property type="term" value="C:membrane"/>
    <property type="evidence" value="ECO:0007669"/>
    <property type="project" value="UniProtKB-SubCell"/>
</dbReference>
<dbReference type="InterPro" id="IPR052461">
    <property type="entry name" value="EVA1_A/B"/>
</dbReference>
<dbReference type="InterPro" id="IPR039500">
    <property type="entry name" value="EVA1_dom"/>
</dbReference>
<dbReference type="PANTHER" id="PTHR48422:SF2">
    <property type="entry name" value="PROTEIN EVA-1 HOMOLOG B"/>
    <property type="match status" value="1"/>
</dbReference>
<dbReference type="PANTHER" id="PTHR48422">
    <property type="entry name" value="PROTEIN EVA-1 HOMOLOG B-RELATED"/>
    <property type="match status" value="1"/>
</dbReference>
<dbReference type="Pfam" id="PF14851">
    <property type="entry name" value="FAM176"/>
    <property type="match status" value="1"/>
</dbReference>
<accession>Q8K2Y3</accession>
<accession>B1AW02</accession>
<name>EVA1B_MOUSE</name>
<comment type="subcellular location">
    <subcellularLocation>
        <location evidence="3">Membrane</location>
        <topology evidence="3">Single-pass membrane protein</topology>
    </subcellularLocation>
</comment>
<comment type="similarity">
    <text evidence="3">Belongs to the EVA1 family.</text>
</comment>
<feature type="chain" id="PRO_0000271113" description="Protein eva-1 homolog B">
    <location>
        <begin position="1"/>
        <end position="164"/>
    </location>
</feature>
<feature type="transmembrane region" description="Helical" evidence="1">
    <location>
        <begin position="29"/>
        <end position="49"/>
    </location>
</feature>
<feature type="region of interest" description="Disordered" evidence="2">
    <location>
        <begin position="56"/>
        <end position="110"/>
    </location>
</feature>
<feature type="compositionally biased region" description="Acidic residues" evidence="2">
    <location>
        <begin position="74"/>
        <end position="85"/>
    </location>
</feature>
<feature type="modified residue" description="Phosphothreonine" evidence="4">
    <location>
        <position position="86"/>
    </location>
</feature>
<feature type="modified residue" description="Phosphothreonine" evidence="4">
    <location>
        <position position="149"/>
    </location>
</feature>
<feature type="modified residue" description="Phosphothreonine" evidence="4">
    <location>
        <position position="157"/>
    </location>
</feature>
<proteinExistence type="evidence at protein level"/>
<sequence>MDAPRRDMELLSNSLAAYAHIRANPESFGLYFVLGVCFGLLLTLCLLVISISCAPRSRPRTPAPRRDPRSSTLEPEDEDDEEDEDTMTRLGPDDTLQGQELSTEPDGPLSVNVFTSAEELERAQRLEERERILREIWRTGQPDLLGSGTLGPGATATLGRMHYY</sequence>
<gene>
    <name type="primary">Eva1b</name>
    <name type="synonym">Fam176b</name>
</gene>
<organism>
    <name type="scientific">Mus musculus</name>
    <name type="common">Mouse</name>
    <dbReference type="NCBI Taxonomy" id="10090"/>
    <lineage>
        <taxon>Eukaryota</taxon>
        <taxon>Metazoa</taxon>
        <taxon>Chordata</taxon>
        <taxon>Craniata</taxon>
        <taxon>Vertebrata</taxon>
        <taxon>Euteleostomi</taxon>
        <taxon>Mammalia</taxon>
        <taxon>Eutheria</taxon>
        <taxon>Euarchontoglires</taxon>
        <taxon>Glires</taxon>
        <taxon>Rodentia</taxon>
        <taxon>Myomorpha</taxon>
        <taxon>Muroidea</taxon>
        <taxon>Muridae</taxon>
        <taxon>Murinae</taxon>
        <taxon>Mus</taxon>
        <taxon>Mus</taxon>
    </lineage>
</organism>
<protein>
    <recommendedName>
        <fullName>Protein eva-1 homolog B</fullName>
    </recommendedName>
    <alternativeName>
        <fullName>Protein FAM176B</fullName>
    </alternativeName>
</protein>
<keyword id="KW-0472">Membrane</keyword>
<keyword id="KW-0597">Phosphoprotein</keyword>
<keyword id="KW-1185">Reference proteome</keyword>
<keyword id="KW-0812">Transmembrane</keyword>
<keyword id="KW-1133">Transmembrane helix</keyword>
<evidence type="ECO:0000255" key="1"/>
<evidence type="ECO:0000256" key="2">
    <source>
        <dbReference type="SAM" id="MobiDB-lite"/>
    </source>
</evidence>
<evidence type="ECO:0000305" key="3"/>
<evidence type="ECO:0007744" key="4">
    <source>
    </source>
</evidence>
<reference key="1">
    <citation type="journal article" date="2005" name="Science">
        <title>The transcriptional landscape of the mammalian genome.</title>
        <authorList>
            <person name="Carninci P."/>
            <person name="Kasukawa T."/>
            <person name="Katayama S."/>
            <person name="Gough J."/>
            <person name="Frith M.C."/>
            <person name="Maeda N."/>
            <person name="Oyama R."/>
            <person name="Ravasi T."/>
            <person name="Lenhard B."/>
            <person name="Wells C."/>
            <person name="Kodzius R."/>
            <person name="Shimokawa K."/>
            <person name="Bajic V.B."/>
            <person name="Brenner S.E."/>
            <person name="Batalov S."/>
            <person name="Forrest A.R."/>
            <person name="Zavolan M."/>
            <person name="Davis M.J."/>
            <person name="Wilming L.G."/>
            <person name="Aidinis V."/>
            <person name="Allen J.E."/>
            <person name="Ambesi-Impiombato A."/>
            <person name="Apweiler R."/>
            <person name="Aturaliya R.N."/>
            <person name="Bailey T.L."/>
            <person name="Bansal M."/>
            <person name="Baxter L."/>
            <person name="Beisel K.W."/>
            <person name="Bersano T."/>
            <person name="Bono H."/>
            <person name="Chalk A.M."/>
            <person name="Chiu K.P."/>
            <person name="Choudhary V."/>
            <person name="Christoffels A."/>
            <person name="Clutterbuck D.R."/>
            <person name="Crowe M.L."/>
            <person name="Dalla E."/>
            <person name="Dalrymple B.P."/>
            <person name="de Bono B."/>
            <person name="Della Gatta G."/>
            <person name="di Bernardo D."/>
            <person name="Down T."/>
            <person name="Engstrom P."/>
            <person name="Fagiolini M."/>
            <person name="Faulkner G."/>
            <person name="Fletcher C.F."/>
            <person name="Fukushima T."/>
            <person name="Furuno M."/>
            <person name="Futaki S."/>
            <person name="Gariboldi M."/>
            <person name="Georgii-Hemming P."/>
            <person name="Gingeras T.R."/>
            <person name="Gojobori T."/>
            <person name="Green R.E."/>
            <person name="Gustincich S."/>
            <person name="Harbers M."/>
            <person name="Hayashi Y."/>
            <person name="Hensch T.K."/>
            <person name="Hirokawa N."/>
            <person name="Hill D."/>
            <person name="Huminiecki L."/>
            <person name="Iacono M."/>
            <person name="Ikeo K."/>
            <person name="Iwama A."/>
            <person name="Ishikawa T."/>
            <person name="Jakt M."/>
            <person name="Kanapin A."/>
            <person name="Katoh M."/>
            <person name="Kawasawa Y."/>
            <person name="Kelso J."/>
            <person name="Kitamura H."/>
            <person name="Kitano H."/>
            <person name="Kollias G."/>
            <person name="Krishnan S.P."/>
            <person name="Kruger A."/>
            <person name="Kummerfeld S.K."/>
            <person name="Kurochkin I.V."/>
            <person name="Lareau L.F."/>
            <person name="Lazarevic D."/>
            <person name="Lipovich L."/>
            <person name="Liu J."/>
            <person name="Liuni S."/>
            <person name="McWilliam S."/>
            <person name="Madan Babu M."/>
            <person name="Madera M."/>
            <person name="Marchionni L."/>
            <person name="Matsuda H."/>
            <person name="Matsuzawa S."/>
            <person name="Miki H."/>
            <person name="Mignone F."/>
            <person name="Miyake S."/>
            <person name="Morris K."/>
            <person name="Mottagui-Tabar S."/>
            <person name="Mulder N."/>
            <person name="Nakano N."/>
            <person name="Nakauchi H."/>
            <person name="Ng P."/>
            <person name="Nilsson R."/>
            <person name="Nishiguchi S."/>
            <person name="Nishikawa S."/>
            <person name="Nori F."/>
            <person name="Ohara O."/>
            <person name="Okazaki Y."/>
            <person name="Orlando V."/>
            <person name="Pang K.C."/>
            <person name="Pavan W.J."/>
            <person name="Pavesi G."/>
            <person name="Pesole G."/>
            <person name="Petrovsky N."/>
            <person name="Piazza S."/>
            <person name="Reed J."/>
            <person name="Reid J.F."/>
            <person name="Ring B.Z."/>
            <person name="Ringwald M."/>
            <person name="Rost B."/>
            <person name="Ruan Y."/>
            <person name="Salzberg S.L."/>
            <person name="Sandelin A."/>
            <person name="Schneider C."/>
            <person name="Schoenbach C."/>
            <person name="Sekiguchi K."/>
            <person name="Semple C.A."/>
            <person name="Seno S."/>
            <person name="Sessa L."/>
            <person name="Sheng Y."/>
            <person name="Shibata Y."/>
            <person name="Shimada H."/>
            <person name="Shimada K."/>
            <person name="Silva D."/>
            <person name="Sinclair B."/>
            <person name="Sperling S."/>
            <person name="Stupka E."/>
            <person name="Sugiura K."/>
            <person name="Sultana R."/>
            <person name="Takenaka Y."/>
            <person name="Taki K."/>
            <person name="Tammoja K."/>
            <person name="Tan S.L."/>
            <person name="Tang S."/>
            <person name="Taylor M.S."/>
            <person name="Tegner J."/>
            <person name="Teichmann S.A."/>
            <person name="Ueda H.R."/>
            <person name="van Nimwegen E."/>
            <person name="Verardo R."/>
            <person name="Wei C.L."/>
            <person name="Yagi K."/>
            <person name="Yamanishi H."/>
            <person name="Zabarovsky E."/>
            <person name="Zhu S."/>
            <person name="Zimmer A."/>
            <person name="Hide W."/>
            <person name="Bult C."/>
            <person name="Grimmond S.M."/>
            <person name="Teasdale R.D."/>
            <person name="Liu E.T."/>
            <person name="Brusic V."/>
            <person name="Quackenbush J."/>
            <person name="Wahlestedt C."/>
            <person name="Mattick J.S."/>
            <person name="Hume D.A."/>
            <person name="Kai C."/>
            <person name="Sasaki D."/>
            <person name="Tomaru Y."/>
            <person name="Fukuda S."/>
            <person name="Kanamori-Katayama M."/>
            <person name="Suzuki M."/>
            <person name="Aoki J."/>
            <person name="Arakawa T."/>
            <person name="Iida J."/>
            <person name="Imamura K."/>
            <person name="Itoh M."/>
            <person name="Kato T."/>
            <person name="Kawaji H."/>
            <person name="Kawagashira N."/>
            <person name="Kawashima T."/>
            <person name="Kojima M."/>
            <person name="Kondo S."/>
            <person name="Konno H."/>
            <person name="Nakano K."/>
            <person name="Ninomiya N."/>
            <person name="Nishio T."/>
            <person name="Okada M."/>
            <person name="Plessy C."/>
            <person name="Shibata K."/>
            <person name="Shiraki T."/>
            <person name="Suzuki S."/>
            <person name="Tagami M."/>
            <person name="Waki K."/>
            <person name="Watahiki A."/>
            <person name="Okamura-Oho Y."/>
            <person name="Suzuki H."/>
            <person name="Kawai J."/>
            <person name="Hayashizaki Y."/>
        </authorList>
    </citation>
    <scope>NUCLEOTIDE SEQUENCE [LARGE SCALE MRNA]</scope>
    <source>
        <strain>C57BL/6J</strain>
    </source>
</reference>
<reference key="2">
    <citation type="journal article" date="2009" name="PLoS Biol.">
        <title>Lineage-specific biology revealed by a finished genome assembly of the mouse.</title>
        <authorList>
            <person name="Church D.M."/>
            <person name="Goodstadt L."/>
            <person name="Hillier L.W."/>
            <person name="Zody M.C."/>
            <person name="Goldstein S."/>
            <person name="She X."/>
            <person name="Bult C.J."/>
            <person name="Agarwala R."/>
            <person name="Cherry J.L."/>
            <person name="DiCuccio M."/>
            <person name="Hlavina W."/>
            <person name="Kapustin Y."/>
            <person name="Meric P."/>
            <person name="Maglott D."/>
            <person name="Birtle Z."/>
            <person name="Marques A.C."/>
            <person name="Graves T."/>
            <person name="Zhou S."/>
            <person name="Teague B."/>
            <person name="Potamousis K."/>
            <person name="Churas C."/>
            <person name="Place M."/>
            <person name="Herschleb J."/>
            <person name="Runnheim R."/>
            <person name="Forrest D."/>
            <person name="Amos-Landgraf J."/>
            <person name="Schwartz D.C."/>
            <person name="Cheng Z."/>
            <person name="Lindblad-Toh K."/>
            <person name="Eichler E.E."/>
            <person name="Ponting C.P."/>
        </authorList>
    </citation>
    <scope>NUCLEOTIDE SEQUENCE [LARGE SCALE GENOMIC DNA]</scope>
    <source>
        <strain>C57BL/6J</strain>
    </source>
</reference>
<reference key="3">
    <citation type="submission" date="2005-07" db="EMBL/GenBank/DDBJ databases">
        <authorList>
            <person name="Mural R.J."/>
            <person name="Adams M.D."/>
            <person name="Myers E.W."/>
            <person name="Smith H.O."/>
            <person name="Venter J.C."/>
        </authorList>
    </citation>
    <scope>NUCLEOTIDE SEQUENCE [LARGE SCALE GENOMIC DNA]</scope>
</reference>
<reference key="4">
    <citation type="journal article" date="2004" name="Genome Res.">
        <title>The status, quality, and expansion of the NIH full-length cDNA project: the Mammalian Gene Collection (MGC).</title>
        <authorList>
            <consortium name="The MGC Project Team"/>
        </authorList>
    </citation>
    <scope>NUCLEOTIDE SEQUENCE [LARGE SCALE MRNA]</scope>
    <source>
        <strain>FVB/N</strain>
        <tissue>Mammary tumor</tissue>
    </source>
</reference>
<reference key="5">
    <citation type="journal article" date="2010" name="Cell">
        <title>A tissue-specific atlas of mouse protein phosphorylation and expression.</title>
        <authorList>
            <person name="Huttlin E.L."/>
            <person name="Jedrychowski M.P."/>
            <person name="Elias J.E."/>
            <person name="Goswami T."/>
            <person name="Rad R."/>
            <person name="Beausoleil S.A."/>
            <person name="Villen J."/>
            <person name="Haas W."/>
            <person name="Sowa M.E."/>
            <person name="Gygi S.P."/>
        </authorList>
    </citation>
    <scope>PHOSPHORYLATION [LARGE SCALE ANALYSIS] AT THR-86; THR-149 AND THR-157</scope>
    <scope>IDENTIFICATION BY MASS SPECTROMETRY [LARGE SCALE ANALYSIS]</scope>
    <source>
        <tissue>Brain</tissue>
        <tissue>Brown adipose tissue</tissue>
        <tissue>Heart</tissue>
        <tissue>Kidney</tissue>
        <tissue>Liver</tissue>
        <tissue>Lung</tissue>
        <tissue>Spleen</tissue>
    </source>
</reference>